<accession>Q478Z2</accession>
<organism>
    <name type="scientific">Dechloromonas aromatica (strain RCB)</name>
    <dbReference type="NCBI Taxonomy" id="159087"/>
    <lineage>
        <taxon>Bacteria</taxon>
        <taxon>Pseudomonadati</taxon>
        <taxon>Pseudomonadota</taxon>
        <taxon>Betaproteobacteria</taxon>
        <taxon>Rhodocyclales</taxon>
        <taxon>Azonexaceae</taxon>
        <taxon>Dechloromonas</taxon>
    </lineage>
</organism>
<keyword id="KW-0963">Cytoplasm</keyword>
<keyword id="KW-0704">Schiff base</keyword>
<keyword id="KW-0784">Thiamine biosynthesis</keyword>
<keyword id="KW-0808">Transferase</keyword>
<gene>
    <name evidence="1" type="primary">thiG</name>
    <name type="ordered locus">Daro_3861</name>
</gene>
<feature type="chain" id="PRO_0000236338" description="Thiazole synthase">
    <location>
        <begin position="1"/>
        <end position="260"/>
    </location>
</feature>
<feature type="active site" description="Schiff-base intermediate with DXP" evidence="1">
    <location>
        <position position="100"/>
    </location>
</feature>
<feature type="binding site" evidence="1">
    <location>
        <position position="161"/>
    </location>
    <ligand>
        <name>1-deoxy-D-xylulose 5-phosphate</name>
        <dbReference type="ChEBI" id="CHEBI:57792"/>
    </ligand>
</feature>
<feature type="binding site" evidence="1">
    <location>
        <begin position="187"/>
        <end position="188"/>
    </location>
    <ligand>
        <name>1-deoxy-D-xylulose 5-phosphate</name>
        <dbReference type="ChEBI" id="CHEBI:57792"/>
    </ligand>
</feature>
<feature type="binding site" evidence="1">
    <location>
        <begin position="209"/>
        <end position="210"/>
    </location>
    <ligand>
        <name>1-deoxy-D-xylulose 5-phosphate</name>
        <dbReference type="ChEBI" id="CHEBI:57792"/>
    </ligand>
</feature>
<sequence>MHQLTIAGKAYRSRLLVGTGKYKDFAETRAAIDASGAEIVTVAIRRTNIGQDASQPNLLDAIPPSKFTILPNTAGCYTADDAVRTLRLARELLDGHPLCKLEVLGDPTNLFPNMPETLKAAETLVKEGFQVMVYCADDPIQCKMLEEIGCVAVMPLASLIGSGMGIVNPWNLRLIIDNAKVPIIVDAGVGTASDAAIAMELGCDGVLMNTAIAHAKDPILMASAMKKGVEAGREAFLAGRMARKYYSADPSSPTSGLIGS</sequence>
<comment type="function">
    <text evidence="1">Catalyzes the rearrangement of 1-deoxy-D-xylulose 5-phosphate (DXP) to produce the thiazole phosphate moiety of thiamine. Sulfur is provided by the thiocarboxylate moiety of the carrier protein ThiS. In vitro, sulfur can be provided by H(2)S.</text>
</comment>
<comment type="catalytic activity">
    <reaction evidence="1">
        <text>[ThiS sulfur-carrier protein]-C-terminal-Gly-aminoethanethioate + 2-iminoacetate + 1-deoxy-D-xylulose 5-phosphate = [ThiS sulfur-carrier protein]-C-terminal Gly-Gly + 2-[(2R,5Z)-2-carboxy-4-methylthiazol-5(2H)-ylidene]ethyl phosphate + 2 H2O + H(+)</text>
        <dbReference type="Rhea" id="RHEA:26297"/>
        <dbReference type="Rhea" id="RHEA-COMP:12909"/>
        <dbReference type="Rhea" id="RHEA-COMP:19908"/>
        <dbReference type="ChEBI" id="CHEBI:15377"/>
        <dbReference type="ChEBI" id="CHEBI:15378"/>
        <dbReference type="ChEBI" id="CHEBI:57792"/>
        <dbReference type="ChEBI" id="CHEBI:62899"/>
        <dbReference type="ChEBI" id="CHEBI:77846"/>
        <dbReference type="ChEBI" id="CHEBI:90778"/>
        <dbReference type="ChEBI" id="CHEBI:232372"/>
        <dbReference type="EC" id="2.8.1.10"/>
    </reaction>
</comment>
<comment type="pathway">
    <text evidence="1">Cofactor biosynthesis; thiamine diphosphate biosynthesis.</text>
</comment>
<comment type="subunit">
    <text evidence="1">Homotetramer. Forms heterodimers with either ThiH or ThiS.</text>
</comment>
<comment type="subcellular location">
    <subcellularLocation>
        <location evidence="1">Cytoplasm</location>
    </subcellularLocation>
</comment>
<comment type="similarity">
    <text evidence="1">Belongs to the ThiG family.</text>
</comment>
<protein>
    <recommendedName>
        <fullName evidence="1">Thiazole synthase</fullName>
        <ecNumber evidence="1">2.8.1.10</ecNumber>
    </recommendedName>
</protein>
<dbReference type="EC" id="2.8.1.10" evidence="1"/>
<dbReference type="EMBL" id="CP000089">
    <property type="protein sequence ID" value="AAZ48589.1"/>
    <property type="molecule type" value="Genomic_DNA"/>
</dbReference>
<dbReference type="SMR" id="Q478Z2"/>
<dbReference type="STRING" id="159087.Daro_3861"/>
<dbReference type="KEGG" id="dar:Daro_3861"/>
<dbReference type="eggNOG" id="COG2022">
    <property type="taxonomic scope" value="Bacteria"/>
</dbReference>
<dbReference type="HOGENOM" id="CLU_062233_1_1_4"/>
<dbReference type="OrthoDB" id="9805935at2"/>
<dbReference type="UniPathway" id="UPA00060"/>
<dbReference type="GO" id="GO:0005737">
    <property type="term" value="C:cytoplasm"/>
    <property type="evidence" value="ECO:0007669"/>
    <property type="project" value="UniProtKB-SubCell"/>
</dbReference>
<dbReference type="GO" id="GO:1990107">
    <property type="term" value="F:thiazole synthase activity"/>
    <property type="evidence" value="ECO:0007669"/>
    <property type="project" value="UniProtKB-EC"/>
</dbReference>
<dbReference type="GO" id="GO:0009229">
    <property type="term" value="P:thiamine diphosphate biosynthetic process"/>
    <property type="evidence" value="ECO:0007669"/>
    <property type="project" value="UniProtKB-UniRule"/>
</dbReference>
<dbReference type="CDD" id="cd04728">
    <property type="entry name" value="ThiG"/>
    <property type="match status" value="1"/>
</dbReference>
<dbReference type="Gene3D" id="3.20.20.70">
    <property type="entry name" value="Aldolase class I"/>
    <property type="match status" value="1"/>
</dbReference>
<dbReference type="HAMAP" id="MF_00443">
    <property type="entry name" value="ThiG"/>
    <property type="match status" value="1"/>
</dbReference>
<dbReference type="InterPro" id="IPR013785">
    <property type="entry name" value="Aldolase_TIM"/>
</dbReference>
<dbReference type="InterPro" id="IPR033983">
    <property type="entry name" value="Thiazole_synthase_ThiG"/>
</dbReference>
<dbReference type="InterPro" id="IPR008867">
    <property type="entry name" value="ThiG"/>
</dbReference>
<dbReference type="PANTHER" id="PTHR34266">
    <property type="entry name" value="THIAZOLE SYNTHASE"/>
    <property type="match status" value="1"/>
</dbReference>
<dbReference type="PANTHER" id="PTHR34266:SF2">
    <property type="entry name" value="THIAZOLE SYNTHASE"/>
    <property type="match status" value="1"/>
</dbReference>
<dbReference type="Pfam" id="PF05690">
    <property type="entry name" value="ThiG"/>
    <property type="match status" value="1"/>
</dbReference>
<dbReference type="SUPFAM" id="SSF110399">
    <property type="entry name" value="ThiG-like"/>
    <property type="match status" value="1"/>
</dbReference>
<proteinExistence type="inferred from homology"/>
<reference key="1">
    <citation type="journal article" date="2009" name="BMC Genomics">
        <title>Metabolic analysis of the soil microbe Dechloromonas aromatica str. RCB: indications of a surprisingly complex life-style and cryptic anaerobic pathways for aromatic degradation.</title>
        <authorList>
            <person name="Salinero K.K."/>
            <person name="Keller K."/>
            <person name="Feil W.S."/>
            <person name="Feil H."/>
            <person name="Trong S."/>
            <person name="Di Bartolo G."/>
            <person name="Lapidus A."/>
        </authorList>
    </citation>
    <scope>NUCLEOTIDE SEQUENCE [LARGE SCALE GENOMIC DNA]</scope>
    <source>
        <strain>RCB</strain>
    </source>
</reference>
<evidence type="ECO:0000255" key="1">
    <source>
        <dbReference type="HAMAP-Rule" id="MF_00443"/>
    </source>
</evidence>
<name>THIG_DECAR</name>